<organismHost>
    <name type="scientific">Homo sapiens</name>
    <name type="common">Human</name>
    <dbReference type="NCBI Taxonomy" id="9606"/>
</organismHost>
<reference key="1">
    <citation type="journal article" date="2007" name="J. Virol.">
        <title>Evolutionary history and global spread of the emerging G12 human rotaviruses.</title>
        <authorList>
            <person name="Rahman M."/>
            <person name="Matthijnssens J."/>
            <person name="Yang X."/>
            <person name="Delbeke T."/>
            <person name="Arijs I."/>
            <person name="Taniguchi K."/>
            <person name="Iturriza-Gomara M."/>
            <person name="Iftekharuddin N."/>
            <person name="Azim T."/>
            <person name="Van Ranst M."/>
        </authorList>
    </citation>
    <scope>NUCLEOTIDE SEQUENCE [GENOMIC RNA]</scope>
</reference>
<reference key="2">
    <citation type="journal article" date="2008" name="J. Virol.">
        <title>Group A human rotavirus genomics: evidence that gene constellations are influenced by viral protein interactions.</title>
        <authorList>
            <person name="Heiman E.M."/>
            <person name="McDonald S.M."/>
            <person name="Barro M."/>
            <person name="Taraporewala Z.F."/>
            <person name="Bar-Magen T."/>
            <person name="Patton J.T."/>
        </authorList>
    </citation>
    <scope>NUCLEOTIDE SEQUENCE [GENOMIC RNA]</scope>
</reference>
<protein>
    <recommendedName>
        <fullName evidence="1">Non-structural protein 2</fullName>
        <shortName evidence="1">NSP2</shortName>
        <ecNumber evidence="1">3.6.4.-</ecNumber>
    </recommendedName>
    <alternativeName>
        <fullName evidence="1">NCVP3</fullName>
    </alternativeName>
    <alternativeName>
        <fullName evidence="1">Non-structural RNA-binding protein 35</fullName>
        <shortName evidence="1">NS35</shortName>
    </alternativeName>
</protein>
<feature type="chain" id="PRO_0000369537" description="Non-structural protein 2">
    <location>
        <begin position="1"/>
        <end position="317"/>
    </location>
</feature>
<feature type="region of interest" description="RNA-binding" evidence="1">
    <location>
        <begin position="205"/>
        <end position="241"/>
    </location>
</feature>
<feature type="active site" description="For NTPase and RTPase activities" evidence="1">
    <location>
        <position position="225"/>
    </location>
</feature>
<feature type="binding site" evidence="1">
    <location>
        <begin position="107"/>
        <end position="109"/>
    </location>
    <ligand>
        <name>ATP</name>
        <dbReference type="ChEBI" id="CHEBI:30616"/>
    </ligand>
</feature>
<feature type="binding site" evidence="1">
    <location>
        <position position="188"/>
    </location>
    <ligand>
        <name>ATP</name>
        <dbReference type="ChEBI" id="CHEBI:30616"/>
    </ligand>
</feature>
<feature type="binding site" evidence="1">
    <location>
        <begin position="221"/>
        <end position="223"/>
    </location>
    <ligand>
        <name>ATP</name>
        <dbReference type="ChEBI" id="CHEBI:30616"/>
    </ligand>
</feature>
<feature type="binding site" evidence="1">
    <location>
        <position position="227"/>
    </location>
    <ligand>
        <name>ATP</name>
        <dbReference type="ChEBI" id="CHEBI:30616"/>
    </ligand>
</feature>
<proteinExistence type="inferred from homology"/>
<accession>A3DSK8</accession>
<accession>B3SRU6</accession>
<organism>
    <name type="scientific">Rotavirus A (strain RVA/Human/Philippines/L26/1987/G12P1B[4])</name>
    <name type="common">RV-A</name>
    <dbReference type="NCBI Taxonomy" id="10953"/>
    <lineage>
        <taxon>Viruses</taxon>
        <taxon>Riboviria</taxon>
        <taxon>Orthornavirae</taxon>
        <taxon>Duplornaviricota</taxon>
        <taxon>Resentoviricetes</taxon>
        <taxon>Reovirales</taxon>
        <taxon>Sedoreoviridae</taxon>
        <taxon>Rotavirus</taxon>
        <taxon>Rotavirus A</taxon>
    </lineage>
</organism>
<keyword id="KW-0067">ATP-binding</keyword>
<keyword id="KW-1035">Host cytoplasm</keyword>
<keyword id="KW-0378">Hydrolase</keyword>
<keyword id="KW-0460">Magnesium</keyword>
<keyword id="KW-0479">Metal-binding</keyword>
<keyword id="KW-0547">Nucleotide-binding</keyword>
<keyword id="KW-0694">RNA-binding</keyword>
<sequence length="317" mass="36556">MAELACFCYPHLENDSYKFIPFNSLAIKCMLTAKVDKKDQDKFYNSIIYGIAPPPQFKKRYNTNDNSRGMNYETSMFNKVAILICEALNSIRVTQSDVANVLSRVVSVRHLENLVLRKENHQDVLFHSKELLLKAVLIAIGQSKEIETTATAEGGEIVFQNAAFTMWKLTYLDHKLMPILDQNFIEYKITLNEDKPISDICVKELVAELRWQYNRFAVITHGKGHYRVIKYSSVANHADRVFATYKNNAKSGNVTDFNLLDQRIIWQNWYAFTSSMKQGNTLDVCKKLLFQKMKQEKNPFKGLSTDRKMDEVSHVGI</sequence>
<name>NSP2_ROTHL</name>
<comment type="function">
    <text evidence="1">Participates in replication and packaging of the viral genome. Plays a crucial role, together with NSP5, in the formation of virus factories (viroplasms), which are large inclusions in the host cytoplasm where replication intermediates are assembled and viral RNA replication takes place. Displays ssRNA binding, NTPase, RNA triphosphatase (RTPase) and ATP-independent helix-unwinding activities. The unwinding activity may prepare and organize plus-strand RNAs for packaging and replication by removing interfering secondary structures. The RTPase activity plays a role in the removal of the gamma-phosphate from the rotavirus RNA minus strands of dsRNA genome segments. Participates in the selective exclusion of host proteins from stress granules (SG) and P bodies (PB). Also participates in the sequestration of these remodeled organelles in viral factories.</text>
</comment>
<comment type="cofactor">
    <cofactor evidence="1">
        <name>Mg(2+)</name>
        <dbReference type="ChEBI" id="CHEBI:18420"/>
    </cofactor>
</comment>
<comment type="subunit">
    <text evidence="1">Homooctamer. Interacts with VP1; this interaction is weak. Interacts with NSP5; this interaction leads to up-regulation of NSP5 phosphorylation and formation of viral factories. Interacts with host DCP1A, DCP1B, DDX6, EDC4 and EIF2S1/eIF2-alpha; these interactions are probably part of the sequestration of some host SGs and PBs proteins in viral factories.</text>
</comment>
<comment type="subcellular location">
    <subcellularLocation>
        <location evidence="1">Host cytoplasm</location>
    </subcellularLocation>
    <text evidence="1">Found in spherical cytoplasmic structures, called viral factories, that appear early after infection and are the site of viral replication and packaging.</text>
</comment>
<comment type="similarity">
    <text evidence="1">Belongs to the rotavirus NSP2 family.</text>
</comment>
<evidence type="ECO:0000255" key="1">
    <source>
        <dbReference type="HAMAP-Rule" id="MF_04089"/>
    </source>
</evidence>
<dbReference type="EC" id="3.6.4.-" evidence="1"/>
<dbReference type="EMBL" id="DQ146696">
    <property type="protein sequence ID" value="ABA34232.1"/>
    <property type="molecule type" value="Genomic_RNA"/>
</dbReference>
<dbReference type="EMBL" id="EF672594">
    <property type="protein sequence ID" value="ABV53271.1"/>
    <property type="molecule type" value="Genomic_RNA"/>
</dbReference>
<dbReference type="SMR" id="A3DSK8"/>
<dbReference type="Proteomes" id="UP000001459">
    <property type="component" value="Genome"/>
</dbReference>
<dbReference type="GO" id="GO:0030430">
    <property type="term" value="C:host cell cytoplasm"/>
    <property type="evidence" value="ECO:0007669"/>
    <property type="project" value="UniProtKB-SubCell"/>
</dbReference>
<dbReference type="GO" id="GO:0005524">
    <property type="term" value="F:ATP binding"/>
    <property type="evidence" value="ECO:0007669"/>
    <property type="project" value="UniProtKB-KW"/>
</dbReference>
<dbReference type="GO" id="GO:0046872">
    <property type="term" value="F:metal ion binding"/>
    <property type="evidence" value="ECO:0007669"/>
    <property type="project" value="UniProtKB-UniRule"/>
</dbReference>
<dbReference type="GO" id="GO:0004550">
    <property type="term" value="F:nucleoside diphosphate kinase activity"/>
    <property type="evidence" value="ECO:0007669"/>
    <property type="project" value="InterPro"/>
</dbReference>
<dbReference type="GO" id="GO:0017111">
    <property type="term" value="F:ribonucleoside triphosphate phosphatase activity"/>
    <property type="evidence" value="ECO:0007669"/>
    <property type="project" value="InterPro"/>
</dbReference>
<dbReference type="GO" id="GO:0003723">
    <property type="term" value="F:RNA binding"/>
    <property type="evidence" value="ECO:0007669"/>
    <property type="project" value="UniProtKB-UniRule"/>
</dbReference>
<dbReference type="GO" id="GO:0019079">
    <property type="term" value="P:viral genome replication"/>
    <property type="evidence" value="ECO:0007669"/>
    <property type="project" value="UniProtKB-UniRule"/>
</dbReference>
<dbReference type="Gene3D" id="3.30.428.20">
    <property type="entry name" value="Rotavirus NSP2 fragment, C-terminal domain"/>
    <property type="match status" value="1"/>
</dbReference>
<dbReference type="Gene3D" id="3.90.1400.10">
    <property type="entry name" value="Rotavirus NSP2 fragment, N-terminal domain"/>
    <property type="match status" value="1"/>
</dbReference>
<dbReference type="HAMAP" id="MF_04089">
    <property type="entry name" value="ROTA_NSP2"/>
    <property type="match status" value="1"/>
</dbReference>
<dbReference type="InterPro" id="IPR048306">
    <property type="entry name" value="Rota_NS35_C"/>
</dbReference>
<dbReference type="InterPro" id="IPR048573">
    <property type="entry name" value="Rota_NS35_N"/>
</dbReference>
<dbReference type="InterPro" id="IPR003668">
    <property type="entry name" value="Rotavirus_NSP2"/>
</dbReference>
<dbReference type="InterPro" id="IPR024076">
    <property type="entry name" value="Rotavirus_NSP2_C"/>
</dbReference>
<dbReference type="InterPro" id="IPR024068">
    <property type="entry name" value="Rotavirus_NSP2_N"/>
</dbReference>
<dbReference type="Pfam" id="PF02509">
    <property type="entry name" value="Rota_NS35_C"/>
    <property type="match status" value="1"/>
</dbReference>
<dbReference type="Pfam" id="PF21067">
    <property type="entry name" value="Rota_NS35_N"/>
    <property type="match status" value="1"/>
</dbReference>
<dbReference type="SUPFAM" id="SSF75347">
    <property type="entry name" value="Rotavirus NSP2 fragment, C-terminal domain"/>
    <property type="match status" value="1"/>
</dbReference>
<dbReference type="SUPFAM" id="SSF75574">
    <property type="entry name" value="Rotavirus NSP2 fragment, N-terminal domain"/>
    <property type="match status" value="1"/>
</dbReference>